<gene>
    <name evidence="1" type="primary">rnfD</name>
    <name type="ordered locus">HD_0400</name>
</gene>
<proteinExistence type="inferred from homology"/>
<name>RNFD_HAEDU</name>
<sequence length="348" mass="37823">MFKMVSSPHTHGTNLTAKFMLWVIVAMLPALIVQIAFFGTGVVIQLAIALSMAIVIEIVVAKLRHKSTTFYLADLAGVVTATILAMAIPPYAPYWVVMIGMIVALLLAKHCYGGLGQNLFNPAMVAYAFLLISFPVQMTSWLPSFELLAEPPTFKDAWLLIFKGVTSDGFTSRQLLSGIDGIAQATPLDSAKTSIAKLGFDGVIQSPIFSGIFARGWLQLNLAFLAGGLFLLYKRIIHWQIPVAMLVVFSVLSALTDLVTMHTHLNVLSQLFSGAMMFGAFFIATDPVSASITPKGKLIFGGLIGLLAYLIRYYGSYPDAIAFAVLLANLCVPLIDHYTQPRLYGTHK</sequence>
<feature type="chain" id="PRO_0000074455" description="Ion-translocating oxidoreductase complex subunit D">
    <location>
        <begin position="1"/>
        <end position="348"/>
    </location>
</feature>
<feature type="transmembrane region" description="Helical" evidence="1">
    <location>
        <begin position="19"/>
        <end position="39"/>
    </location>
</feature>
<feature type="transmembrane region" description="Helical" evidence="1">
    <location>
        <begin position="41"/>
        <end position="61"/>
    </location>
</feature>
<feature type="transmembrane region" description="Helical" evidence="1">
    <location>
        <begin position="66"/>
        <end position="86"/>
    </location>
</feature>
<feature type="transmembrane region" description="Helical" evidence="1">
    <location>
        <begin position="87"/>
        <end position="107"/>
    </location>
</feature>
<feature type="transmembrane region" description="Helical" evidence="1">
    <location>
        <begin position="122"/>
        <end position="142"/>
    </location>
</feature>
<feature type="transmembrane region" description="Helical" evidence="1">
    <location>
        <begin position="212"/>
        <end position="232"/>
    </location>
</feature>
<feature type="transmembrane region" description="Helical" evidence="1">
    <location>
        <begin position="236"/>
        <end position="256"/>
    </location>
</feature>
<feature type="transmembrane region" description="Helical" evidence="1">
    <location>
        <begin position="265"/>
        <end position="285"/>
    </location>
</feature>
<feature type="transmembrane region" description="Helical" evidence="1">
    <location>
        <begin position="291"/>
        <end position="311"/>
    </location>
</feature>
<feature type="transmembrane region" description="Helical" evidence="1">
    <location>
        <begin position="315"/>
        <end position="335"/>
    </location>
</feature>
<feature type="modified residue" description="FMN phosphoryl threonine" evidence="1">
    <location>
        <position position="186"/>
    </location>
</feature>
<dbReference type="EC" id="7.-.-.-" evidence="1"/>
<dbReference type="EMBL" id="AE017143">
    <property type="protein sequence ID" value="AAP95366.1"/>
    <property type="molecule type" value="Genomic_DNA"/>
</dbReference>
<dbReference type="RefSeq" id="WP_010944419.1">
    <property type="nucleotide sequence ID" value="NC_002940.2"/>
</dbReference>
<dbReference type="SMR" id="Q7VNT3"/>
<dbReference type="STRING" id="233412.HD_0400"/>
<dbReference type="KEGG" id="hdu:HD_0400"/>
<dbReference type="eggNOG" id="COG4658">
    <property type="taxonomic scope" value="Bacteria"/>
</dbReference>
<dbReference type="HOGENOM" id="CLU_042020_0_0_6"/>
<dbReference type="OrthoDB" id="9776359at2"/>
<dbReference type="Proteomes" id="UP000001022">
    <property type="component" value="Chromosome"/>
</dbReference>
<dbReference type="GO" id="GO:0005886">
    <property type="term" value="C:plasma membrane"/>
    <property type="evidence" value="ECO:0007669"/>
    <property type="project" value="UniProtKB-SubCell"/>
</dbReference>
<dbReference type="GO" id="GO:0022900">
    <property type="term" value="P:electron transport chain"/>
    <property type="evidence" value="ECO:0007669"/>
    <property type="project" value="UniProtKB-UniRule"/>
</dbReference>
<dbReference type="GO" id="GO:0055085">
    <property type="term" value="P:transmembrane transport"/>
    <property type="evidence" value="ECO:0007669"/>
    <property type="project" value="InterPro"/>
</dbReference>
<dbReference type="HAMAP" id="MF_00462">
    <property type="entry name" value="RsxD_RnfD"/>
    <property type="match status" value="1"/>
</dbReference>
<dbReference type="InterPro" id="IPR004338">
    <property type="entry name" value="NqrB/RnfD"/>
</dbReference>
<dbReference type="InterPro" id="IPR011303">
    <property type="entry name" value="RnfD_bac"/>
</dbReference>
<dbReference type="NCBIfam" id="NF002011">
    <property type="entry name" value="PRK00816.1"/>
    <property type="match status" value="1"/>
</dbReference>
<dbReference type="NCBIfam" id="TIGR01946">
    <property type="entry name" value="rnfD"/>
    <property type="match status" value="1"/>
</dbReference>
<dbReference type="PANTHER" id="PTHR30578">
    <property type="entry name" value="ELECTRON TRANSPORT COMPLEX PROTEIN RNFD"/>
    <property type="match status" value="1"/>
</dbReference>
<dbReference type="PANTHER" id="PTHR30578:SF0">
    <property type="entry name" value="ION-TRANSLOCATING OXIDOREDUCTASE COMPLEX SUBUNIT D"/>
    <property type="match status" value="1"/>
</dbReference>
<dbReference type="Pfam" id="PF03116">
    <property type="entry name" value="NQR2_RnfD_RnfE"/>
    <property type="match status" value="1"/>
</dbReference>
<evidence type="ECO:0000255" key="1">
    <source>
        <dbReference type="HAMAP-Rule" id="MF_00462"/>
    </source>
</evidence>
<comment type="function">
    <text evidence="1">Part of a membrane-bound complex that couples electron transfer with translocation of ions across the membrane.</text>
</comment>
<comment type="cofactor">
    <cofactor evidence="1">
        <name>FMN</name>
        <dbReference type="ChEBI" id="CHEBI:58210"/>
    </cofactor>
</comment>
<comment type="subunit">
    <text evidence="1">The complex is composed of six subunits: RnfA, RnfB, RnfC, RnfD, RnfE and RnfG.</text>
</comment>
<comment type="subcellular location">
    <subcellularLocation>
        <location evidence="1">Cell inner membrane</location>
        <topology evidence="1">Multi-pass membrane protein</topology>
    </subcellularLocation>
</comment>
<comment type="similarity">
    <text evidence="1">Belongs to the NqrB/RnfD family.</text>
</comment>
<organism>
    <name type="scientific">Haemophilus ducreyi (strain 35000HP / ATCC 700724)</name>
    <dbReference type="NCBI Taxonomy" id="233412"/>
    <lineage>
        <taxon>Bacteria</taxon>
        <taxon>Pseudomonadati</taxon>
        <taxon>Pseudomonadota</taxon>
        <taxon>Gammaproteobacteria</taxon>
        <taxon>Pasteurellales</taxon>
        <taxon>Pasteurellaceae</taxon>
        <taxon>Haemophilus</taxon>
    </lineage>
</organism>
<accession>Q7VNT3</accession>
<protein>
    <recommendedName>
        <fullName evidence="1">Ion-translocating oxidoreductase complex subunit D</fullName>
        <ecNumber evidence="1">7.-.-.-</ecNumber>
    </recommendedName>
    <alternativeName>
        <fullName evidence="1">Rnf electron transport complex subunit D</fullName>
    </alternativeName>
</protein>
<reference key="1">
    <citation type="submission" date="2003-06" db="EMBL/GenBank/DDBJ databases">
        <title>The complete genome sequence of Haemophilus ducreyi.</title>
        <authorList>
            <person name="Munson R.S. Jr."/>
            <person name="Ray W.C."/>
            <person name="Mahairas G."/>
            <person name="Sabo P."/>
            <person name="Mungur R."/>
            <person name="Johnson L."/>
            <person name="Nguyen D."/>
            <person name="Wang J."/>
            <person name="Forst C."/>
            <person name="Hood L."/>
        </authorList>
    </citation>
    <scope>NUCLEOTIDE SEQUENCE [LARGE SCALE GENOMIC DNA]</scope>
    <source>
        <strain>35000HP / ATCC 700724</strain>
    </source>
</reference>
<keyword id="KW-0997">Cell inner membrane</keyword>
<keyword id="KW-1003">Cell membrane</keyword>
<keyword id="KW-0249">Electron transport</keyword>
<keyword id="KW-0285">Flavoprotein</keyword>
<keyword id="KW-0288">FMN</keyword>
<keyword id="KW-0472">Membrane</keyword>
<keyword id="KW-0597">Phosphoprotein</keyword>
<keyword id="KW-1185">Reference proteome</keyword>
<keyword id="KW-1278">Translocase</keyword>
<keyword id="KW-0812">Transmembrane</keyword>
<keyword id="KW-1133">Transmembrane helix</keyword>
<keyword id="KW-0813">Transport</keyword>